<accession>Q06659</accession>
<proteinExistence type="inferred from homology"/>
<organism>
    <name type="scientific">Tomato mottle virus (isolate Florida)</name>
    <name type="common">ToMoV</name>
    <dbReference type="NCBI Taxonomy" id="223359"/>
    <lineage>
        <taxon>Viruses</taxon>
        <taxon>Monodnaviria</taxon>
        <taxon>Shotokuvirae</taxon>
        <taxon>Cressdnaviricota</taxon>
        <taxon>Repensiviricetes</taxon>
        <taxon>Geplafuvirales</taxon>
        <taxon>Geminiviridae</taxon>
        <taxon>Begomovirus</taxon>
        <taxon>Tomato mottle virus</taxon>
    </lineage>
</organism>
<gene>
    <name type="ORF">AC3</name>
    <name type="ORF">AL3</name>
</gene>
<protein>
    <recommendedName>
        <fullName>Replication enhancer protein</fullName>
        <shortName>REn</shortName>
    </recommendedName>
    <alternativeName>
        <fullName>Protein AC3</fullName>
    </alternativeName>
    <alternativeName>
        <fullName>Protein AL3</fullName>
    </alternativeName>
</protein>
<reference key="1">
    <citation type="journal article" date="1992" name="J. Gen. Virol.">
        <title>The nucleotide sequence of tomato mottle virus, a new geminivirus isolated from tomatoes in Florida.</title>
        <authorList>
            <person name="Abouzid A.M."/>
            <person name="Polston J.E."/>
            <person name="Hiebert E."/>
        </authorList>
    </citation>
    <scope>NUCLEOTIDE SEQUENCE [GENOMIC DNA]</scope>
</reference>
<sequence>MDSRTGELITAHQAENGVYIWELENPLYFKIHRVEDPLYTRTRVYHVQIRFNHNLRKALHLHKAYLNFQVWTTSMTASGSIYLARFRYLVNMYLDQLGVISINNVVRAVRFATNRVYVNHVLENHSIKFKFY</sequence>
<comment type="function">
    <text evidence="1">Increases viral DNA accumulation. Enhances infectivity and symptom expression (By similarity).</text>
</comment>
<comment type="subunit">
    <text evidence="1">Homooligomer. Interacts with the replication-associated protein (REP). Interacts with host proliferating cell nuclear antigen (PCNA). Interacts with host retinoblastoma-related protein 1 (RBR1), and may thereby deregulate the host cell cycle. Oligomerization and interaction with PCNA are necessary for optimal replication enhancement (By similarity).</text>
</comment>
<comment type="similarity">
    <text evidence="2">Belongs to the geminiviridae replication enhancer protein family.</text>
</comment>
<keyword id="KW-0945">Host-virus interaction</keyword>
<name>REN_TMOV</name>
<dbReference type="EMBL" id="L14460">
    <property type="protein sequence ID" value="AAC32416.1"/>
    <property type="molecule type" value="Genomic_DNA"/>
</dbReference>
<dbReference type="PIR" id="JQ1872">
    <property type="entry name" value="JQ1872"/>
</dbReference>
<dbReference type="RefSeq" id="NP_047251.1">
    <property type="nucleotide sequence ID" value="NC_001938.1"/>
</dbReference>
<dbReference type="GeneID" id="956411"/>
<dbReference type="KEGG" id="vg:956411"/>
<dbReference type="Proteomes" id="UP000008249">
    <property type="component" value="Genome"/>
</dbReference>
<dbReference type="GO" id="GO:0016032">
    <property type="term" value="P:viral process"/>
    <property type="evidence" value="ECO:0007669"/>
    <property type="project" value="InterPro"/>
</dbReference>
<dbReference type="InterPro" id="IPR000657">
    <property type="entry name" value="Gemini_AL3"/>
</dbReference>
<dbReference type="Pfam" id="PF01407">
    <property type="entry name" value="Gemini_AL3"/>
    <property type="match status" value="1"/>
</dbReference>
<dbReference type="PRINTS" id="PR00231">
    <property type="entry name" value="GEMCOATAL3"/>
</dbReference>
<feature type="chain" id="PRO_0000222246" description="Replication enhancer protein">
    <location>
        <begin position="1"/>
        <end position="132"/>
    </location>
</feature>
<evidence type="ECO:0000250" key="1"/>
<evidence type="ECO:0000305" key="2"/>
<organismHost>
    <name type="scientific">Nicotiana tabacum</name>
    <name type="common">Common tobacco</name>
    <dbReference type="NCBI Taxonomy" id="4097"/>
</organismHost>